<sequence>MAIDKELQFTRNIGIMAHIDAGKTTTSERILFYTGLTHKIGEVHDGAATMDWMEQEQERGITITSAATTAFWNYNNQKYKINLIDTPGHVDFTVEVERSLRILDGAVAAFCAVGGVEPQSETVWRQAEKYNVPRIGYVNKMDRSGANFFEVVRQLREVLGANPCPIQIPIGAEETFKGVVDLVSMKALVWNDETMGAKYDVEDIPAELVGEAEEWRDKMLETLADCDDTLMEKYFDDPSTITEDEIIAALRKGTLAMQINPMLCGSSFKNKGVQTLLDAVCKFLPSPADTPTVEGTDPSDPNKVIERKTSPNEPLCALAFKIATDPYVGRLCFFRVYSGELPAGSYVYNARSEKKERISRLFQMHSNKQNPKEVIGCGDIGAGVGFKDIRTGDTLCDENHPIVLESMDFPDPVIGIAVEPKTQKDLDRLGVGLAKLAEEDPTFRVQTNEDSGQTVISGMGELHLDIIIDRLRREFKVECNQGRPQVSYKEAINDPVELREVYKKQTGGRGKFADIICRVEPADADFEGELQFVDEVKGGNIPKEFIPSIQKGFQRAMKNGVLAGYPLDQLKVTVIDGSFHPVDSDQLSFEICALQAFKNACEKAHPTLMEPIMKLEVVTPEESMGDVIGDLNKRRGQVEGMESSRTGARIVKAKVPLAEMFGYVTALRTITSGRATSTMTFSHYSEVPSTIAKQVLTEAQGRVDLIK</sequence>
<name>EFG_PORG3</name>
<feature type="chain" id="PRO_1000091747" description="Elongation factor G">
    <location>
        <begin position="1"/>
        <end position="707"/>
    </location>
</feature>
<feature type="domain" description="tr-type G">
    <location>
        <begin position="8"/>
        <end position="288"/>
    </location>
</feature>
<feature type="region of interest" description="Disordered" evidence="2">
    <location>
        <begin position="288"/>
        <end position="308"/>
    </location>
</feature>
<feature type="binding site" evidence="1">
    <location>
        <begin position="17"/>
        <end position="24"/>
    </location>
    <ligand>
        <name>GTP</name>
        <dbReference type="ChEBI" id="CHEBI:37565"/>
    </ligand>
</feature>
<feature type="binding site" evidence="1">
    <location>
        <begin position="85"/>
        <end position="89"/>
    </location>
    <ligand>
        <name>GTP</name>
        <dbReference type="ChEBI" id="CHEBI:37565"/>
    </ligand>
</feature>
<feature type="binding site" evidence="1">
    <location>
        <begin position="139"/>
        <end position="142"/>
    </location>
    <ligand>
        <name>GTP</name>
        <dbReference type="ChEBI" id="CHEBI:37565"/>
    </ligand>
</feature>
<dbReference type="EMBL" id="AP009380">
    <property type="protein sequence ID" value="BAG34389.1"/>
    <property type="molecule type" value="Genomic_DNA"/>
</dbReference>
<dbReference type="RefSeq" id="WP_012458579.1">
    <property type="nucleotide sequence ID" value="NC_010729.1"/>
</dbReference>
<dbReference type="SMR" id="B2RLZ4"/>
<dbReference type="GeneID" id="29257021"/>
<dbReference type="KEGG" id="pgn:PGN_1870"/>
<dbReference type="eggNOG" id="COG0480">
    <property type="taxonomic scope" value="Bacteria"/>
</dbReference>
<dbReference type="HOGENOM" id="CLU_002794_4_1_10"/>
<dbReference type="OrthoDB" id="9801591at2"/>
<dbReference type="BioCyc" id="PGIN431947:G1G2V-2084-MONOMER"/>
<dbReference type="Proteomes" id="UP000008842">
    <property type="component" value="Chromosome"/>
</dbReference>
<dbReference type="GO" id="GO:0005737">
    <property type="term" value="C:cytoplasm"/>
    <property type="evidence" value="ECO:0007669"/>
    <property type="project" value="UniProtKB-SubCell"/>
</dbReference>
<dbReference type="GO" id="GO:0005525">
    <property type="term" value="F:GTP binding"/>
    <property type="evidence" value="ECO:0007669"/>
    <property type="project" value="UniProtKB-UniRule"/>
</dbReference>
<dbReference type="GO" id="GO:0003924">
    <property type="term" value="F:GTPase activity"/>
    <property type="evidence" value="ECO:0007669"/>
    <property type="project" value="InterPro"/>
</dbReference>
<dbReference type="GO" id="GO:0003746">
    <property type="term" value="F:translation elongation factor activity"/>
    <property type="evidence" value="ECO:0007669"/>
    <property type="project" value="UniProtKB-UniRule"/>
</dbReference>
<dbReference type="GO" id="GO:0032790">
    <property type="term" value="P:ribosome disassembly"/>
    <property type="evidence" value="ECO:0007669"/>
    <property type="project" value="TreeGrafter"/>
</dbReference>
<dbReference type="CDD" id="cd01886">
    <property type="entry name" value="EF-G"/>
    <property type="match status" value="1"/>
</dbReference>
<dbReference type="CDD" id="cd16262">
    <property type="entry name" value="EFG_III"/>
    <property type="match status" value="1"/>
</dbReference>
<dbReference type="CDD" id="cd01434">
    <property type="entry name" value="EFG_mtEFG1_IV"/>
    <property type="match status" value="1"/>
</dbReference>
<dbReference type="CDD" id="cd03713">
    <property type="entry name" value="EFG_mtEFG_C"/>
    <property type="match status" value="1"/>
</dbReference>
<dbReference type="CDD" id="cd04088">
    <property type="entry name" value="EFG_mtEFG_II"/>
    <property type="match status" value="1"/>
</dbReference>
<dbReference type="FunFam" id="2.40.30.10:FF:000006">
    <property type="entry name" value="Elongation factor G"/>
    <property type="match status" value="1"/>
</dbReference>
<dbReference type="FunFam" id="3.30.230.10:FF:000003">
    <property type="entry name" value="Elongation factor G"/>
    <property type="match status" value="1"/>
</dbReference>
<dbReference type="FunFam" id="3.30.70.240:FF:000001">
    <property type="entry name" value="Elongation factor G"/>
    <property type="match status" value="1"/>
</dbReference>
<dbReference type="FunFam" id="3.30.70.870:FF:000001">
    <property type="entry name" value="Elongation factor G"/>
    <property type="match status" value="1"/>
</dbReference>
<dbReference type="FunFam" id="3.40.50.300:FF:000029">
    <property type="entry name" value="Elongation factor G"/>
    <property type="match status" value="1"/>
</dbReference>
<dbReference type="Gene3D" id="3.30.230.10">
    <property type="match status" value="1"/>
</dbReference>
<dbReference type="Gene3D" id="3.30.70.240">
    <property type="match status" value="1"/>
</dbReference>
<dbReference type="Gene3D" id="3.30.70.870">
    <property type="entry name" value="Elongation Factor G (Translational Gtpase), domain 3"/>
    <property type="match status" value="1"/>
</dbReference>
<dbReference type="Gene3D" id="3.40.50.300">
    <property type="entry name" value="P-loop containing nucleotide triphosphate hydrolases"/>
    <property type="match status" value="1"/>
</dbReference>
<dbReference type="Gene3D" id="2.40.30.10">
    <property type="entry name" value="Translation factors"/>
    <property type="match status" value="1"/>
</dbReference>
<dbReference type="HAMAP" id="MF_00054_B">
    <property type="entry name" value="EF_G_EF_2_B"/>
    <property type="match status" value="1"/>
</dbReference>
<dbReference type="InterPro" id="IPR041095">
    <property type="entry name" value="EFG_II"/>
</dbReference>
<dbReference type="InterPro" id="IPR009022">
    <property type="entry name" value="EFG_III"/>
</dbReference>
<dbReference type="InterPro" id="IPR035647">
    <property type="entry name" value="EFG_III/V"/>
</dbReference>
<dbReference type="InterPro" id="IPR047872">
    <property type="entry name" value="EFG_IV"/>
</dbReference>
<dbReference type="InterPro" id="IPR035649">
    <property type="entry name" value="EFG_V"/>
</dbReference>
<dbReference type="InterPro" id="IPR000640">
    <property type="entry name" value="EFG_V-like"/>
</dbReference>
<dbReference type="InterPro" id="IPR004161">
    <property type="entry name" value="EFTu-like_2"/>
</dbReference>
<dbReference type="InterPro" id="IPR031157">
    <property type="entry name" value="G_TR_CS"/>
</dbReference>
<dbReference type="InterPro" id="IPR027417">
    <property type="entry name" value="P-loop_NTPase"/>
</dbReference>
<dbReference type="InterPro" id="IPR020568">
    <property type="entry name" value="Ribosomal_Su5_D2-typ_SF"/>
</dbReference>
<dbReference type="InterPro" id="IPR014721">
    <property type="entry name" value="Ribsml_uS5_D2-typ_fold_subgr"/>
</dbReference>
<dbReference type="InterPro" id="IPR005225">
    <property type="entry name" value="Small_GTP-bd"/>
</dbReference>
<dbReference type="InterPro" id="IPR000795">
    <property type="entry name" value="T_Tr_GTP-bd_dom"/>
</dbReference>
<dbReference type="InterPro" id="IPR009000">
    <property type="entry name" value="Transl_B-barrel_sf"/>
</dbReference>
<dbReference type="InterPro" id="IPR004540">
    <property type="entry name" value="Transl_elong_EFG/EF2"/>
</dbReference>
<dbReference type="InterPro" id="IPR005517">
    <property type="entry name" value="Transl_elong_EFG/EF2_IV"/>
</dbReference>
<dbReference type="NCBIfam" id="TIGR00484">
    <property type="entry name" value="EF-G"/>
    <property type="match status" value="1"/>
</dbReference>
<dbReference type="NCBIfam" id="NF009381">
    <property type="entry name" value="PRK12740.1-5"/>
    <property type="match status" value="1"/>
</dbReference>
<dbReference type="NCBIfam" id="TIGR00231">
    <property type="entry name" value="small_GTP"/>
    <property type="match status" value="1"/>
</dbReference>
<dbReference type="PANTHER" id="PTHR43261:SF1">
    <property type="entry name" value="RIBOSOME-RELEASING FACTOR 2, MITOCHONDRIAL"/>
    <property type="match status" value="1"/>
</dbReference>
<dbReference type="PANTHER" id="PTHR43261">
    <property type="entry name" value="TRANSLATION ELONGATION FACTOR G-RELATED"/>
    <property type="match status" value="1"/>
</dbReference>
<dbReference type="Pfam" id="PF00679">
    <property type="entry name" value="EFG_C"/>
    <property type="match status" value="1"/>
</dbReference>
<dbReference type="Pfam" id="PF14492">
    <property type="entry name" value="EFG_III"/>
    <property type="match status" value="1"/>
</dbReference>
<dbReference type="Pfam" id="PF03764">
    <property type="entry name" value="EFG_IV"/>
    <property type="match status" value="1"/>
</dbReference>
<dbReference type="Pfam" id="PF00009">
    <property type="entry name" value="GTP_EFTU"/>
    <property type="match status" value="1"/>
</dbReference>
<dbReference type="Pfam" id="PF03144">
    <property type="entry name" value="GTP_EFTU_D2"/>
    <property type="match status" value="1"/>
</dbReference>
<dbReference type="PRINTS" id="PR00315">
    <property type="entry name" value="ELONGATNFCT"/>
</dbReference>
<dbReference type="SMART" id="SM00838">
    <property type="entry name" value="EFG_C"/>
    <property type="match status" value="1"/>
</dbReference>
<dbReference type="SMART" id="SM00889">
    <property type="entry name" value="EFG_IV"/>
    <property type="match status" value="1"/>
</dbReference>
<dbReference type="SUPFAM" id="SSF54980">
    <property type="entry name" value="EF-G C-terminal domain-like"/>
    <property type="match status" value="2"/>
</dbReference>
<dbReference type="SUPFAM" id="SSF52540">
    <property type="entry name" value="P-loop containing nucleoside triphosphate hydrolases"/>
    <property type="match status" value="1"/>
</dbReference>
<dbReference type="SUPFAM" id="SSF54211">
    <property type="entry name" value="Ribosomal protein S5 domain 2-like"/>
    <property type="match status" value="1"/>
</dbReference>
<dbReference type="SUPFAM" id="SSF50447">
    <property type="entry name" value="Translation proteins"/>
    <property type="match status" value="1"/>
</dbReference>
<dbReference type="PROSITE" id="PS00301">
    <property type="entry name" value="G_TR_1"/>
    <property type="match status" value="1"/>
</dbReference>
<dbReference type="PROSITE" id="PS51722">
    <property type="entry name" value="G_TR_2"/>
    <property type="match status" value="1"/>
</dbReference>
<evidence type="ECO:0000255" key="1">
    <source>
        <dbReference type="HAMAP-Rule" id="MF_00054"/>
    </source>
</evidence>
<evidence type="ECO:0000256" key="2">
    <source>
        <dbReference type="SAM" id="MobiDB-lite"/>
    </source>
</evidence>
<organism>
    <name type="scientific">Porphyromonas gingivalis (strain ATCC 33277 / DSM 20709 / CIP 103683 / JCM 12257 / NCTC 11834 / 2561)</name>
    <dbReference type="NCBI Taxonomy" id="431947"/>
    <lineage>
        <taxon>Bacteria</taxon>
        <taxon>Pseudomonadati</taxon>
        <taxon>Bacteroidota</taxon>
        <taxon>Bacteroidia</taxon>
        <taxon>Bacteroidales</taxon>
        <taxon>Porphyromonadaceae</taxon>
        <taxon>Porphyromonas</taxon>
    </lineage>
</organism>
<comment type="function">
    <text evidence="1">Catalyzes the GTP-dependent ribosomal translocation step during translation elongation. During this step, the ribosome changes from the pre-translocational (PRE) to the post-translocational (POST) state as the newly formed A-site-bound peptidyl-tRNA and P-site-bound deacylated tRNA move to the P and E sites, respectively. Catalyzes the coordinated movement of the two tRNA molecules, the mRNA and conformational changes in the ribosome.</text>
</comment>
<comment type="subcellular location">
    <subcellularLocation>
        <location evidence="1">Cytoplasm</location>
    </subcellularLocation>
</comment>
<comment type="similarity">
    <text evidence="1">Belongs to the TRAFAC class translation factor GTPase superfamily. Classic translation factor GTPase family. EF-G/EF-2 subfamily.</text>
</comment>
<protein>
    <recommendedName>
        <fullName evidence="1">Elongation factor G</fullName>
        <shortName evidence="1">EF-G</shortName>
    </recommendedName>
</protein>
<keyword id="KW-0963">Cytoplasm</keyword>
<keyword id="KW-0251">Elongation factor</keyword>
<keyword id="KW-0342">GTP-binding</keyword>
<keyword id="KW-0547">Nucleotide-binding</keyword>
<keyword id="KW-0648">Protein biosynthesis</keyword>
<proteinExistence type="inferred from homology"/>
<reference key="1">
    <citation type="journal article" date="2008" name="DNA Res.">
        <title>Determination of the genome sequence of Porphyromonas gingivalis strain ATCC 33277 and genomic comparison with strain W83 revealed extensive genome rearrangements in P. gingivalis.</title>
        <authorList>
            <person name="Naito M."/>
            <person name="Hirakawa H."/>
            <person name="Yamashita A."/>
            <person name="Ohara N."/>
            <person name="Shoji M."/>
            <person name="Yukitake H."/>
            <person name="Nakayama K."/>
            <person name="Toh H."/>
            <person name="Yoshimura F."/>
            <person name="Kuhara S."/>
            <person name="Hattori M."/>
            <person name="Hayashi T."/>
            <person name="Nakayama K."/>
        </authorList>
    </citation>
    <scope>NUCLEOTIDE SEQUENCE [LARGE SCALE GENOMIC DNA]</scope>
    <source>
        <strain>ATCC 33277 / DSM 20709 / CIP 103683 / JCM 12257 / NCTC 11834 / 2561</strain>
    </source>
</reference>
<gene>
    <name evidence="1" type="primary">fusA</name>
    <name type="ordered locus">PGN_1870</name>
</gene>
<accession>B2RLZ4</accession>